<feature type="chain" id="PRO_0000247290" description="Putative ADP-ribosyl glycohydrolase L444">
    <location>
        <begin position="1"/>
        <end position="513"/>
    </location>
</feature>
<feature type="region of interest" description="Disordered" evidence="1">
    <location>
        <begin position="1"/>
        <end position="33"/>
    </location>
</feature>
<feature type="compositionally biased region" description="Basic and acidic residues" evidence="1">
    <location>
        <begin position="1"/>
        <end position="23"/>
    </location>
</feature>
<feature type="compositionally biased region" description="Polar residues" evidence="1">
    <location>
        <begin position="24"/>
        <end position="33"/>
    </location>
</feature>
<organism>
    <name type="scientific">Acanthamoeba polyphaga mimivirus</name>
    <name type="common">APMV</name>
    <dbReference type="NCBI Taxonomy" id="212035"/>
    <lineage>
        <taxon>Viruses</taxon>
        <taxon>Varidnaviria</taxon>
        <taxon>Bamfordvirae</taxon>
        <taxon>Nucleocytoviricota</taxon>
        <taxon>Megaviricetes</taxon>
        <taxon>Imitervirales</taxon>
        <taxon>Mimiviridae</taxon>
        <taxon>Megamimivirinae</taxon>
        <taxon>Mimivirus</taxon>
        <taxon>Mimivirus bradfordmassiliense</taxon>
    </lineage>
</organism>
<dbReference type="EC" id="3.2.2.-"/>
<dbReference type="EMBL" id="AY653733">
    <property type="protein sequence ID" value="AAV50710.1"/>
    <property type="molecule type" value="Genomic_DNA"/>
</dbReference>
<dbReference type="SMR" id="Q5UQP4"/>
<dbReference type="KEGG" id="vg:9925068"/>
<dbReference type="OrthoDB" id="5955at10239"/>
<dbReference type="Proteomes" id="UP000001134">
    <property type="component" value="Genome"/>
</dbReference>
<dbReference type="GO" id="GO:0016787">
    <property type="term" value="F:hydrolase activity"/>
    <property type="evidence" value="ECO:0007669"/>
    <property type="project" value="UniProtKB-KW"/>
</dbReference>
<dbReference type="Gene3D" id="1.10.4080.10">
    <property type="entry name" value="ADP-ribosylation/Crystallin J1"/>
    <property type="match status" value="1"/>
</dbReference>
<dbReference type="InterPro" id="IPR050792">
    <property type="entry name" value="ADP-ribosylglycohydrolase"/>
</dbReference>
<dbReference type="InterPro" id="IPR005502">
    <property type="entry name" value="Ribosyl_crysJ1"/>
</dbReference>
<dbReference type="InterPro" id="IPR036705">
    <property type="entry name" value="Ribosyl_crysJ1_sf"/>
</dbReference>
<dbReference type="PANTHER" id="PTHR16222">
    <property type="entry name" value="ADP-RIBOSYLGLYCOHYDROLASE"/>
    <property type="match status" value="1"/>
</dbReference>
<dbReference type="PANTHER" id="PTHR16222:SF26">
    <property type="entry name" value="ADP-RIBOSYLHYDROLASE ARH1"/>
    <property type="match status" value="1"/>
</dbReference>
<dbReference type="Pfam" id="PF03747">
    <property type="entry name" value="ADP_ribosyl_GH"/>
    <property type="match status" value="1"/>
</dbReference>
<dbReference type="SUPFAM" id="SSF101478">
    <property type="entry name" value="ADP-ribosylglycohydrolase"/>
    <property type="match status" value="1"/>
</dbReference>
<keyword id="KW-0378">Hydrolase</keyword>
<keyword id="KW-1185">Reference proteome</keyword>
<organismHost>
    <name type="scientific">Acanthamoeba polyphaga</name>
    <name type="common">Amoeba</name>
    <dbReference type="NCBI Taxonomy" id="5757"/>
</organismHost>
<sequence length="513" mass="58753">MSDKIQSRESKTTKPTKTEKISDKSGNLSQVKSSKNLSKSQSIYLEIDSLSKKFLEEGRQYIYKWIRDEYGLSKNEATALDISIYNTTIARMINIYKFDETLAAFLPFKFGKEIISPRQDFYGFATTCGTILYYQSFGDTLGYYNGNWEFNYGNDNRPDYVNDLISEFIHLGGINDISMVNWLASDDTILYLITARVVLEYFFQGDNAEISYFGTRLRQEYLKAKPLIQNRHPGQTTMDSLDIMSNIEWDKLPYNSRAIGAGAAMRSGSIGIFYPGRQNRKKLVALAVECSRITHNSATAILGSVTSALFTAFSLEKISVNLWPHYLLEILRSNIIDEYIEQSRPNEYSLFSRDKVIFQGQWEKYVSSRFSGVNPRDLRYMHNPVERYRYLTENFSKGCDMPGGCGDDCVIMAYDSLLQSNGVLEKVVVYSILHPGDSDTVGSVALSWFGAYYSTKKNLDILSPRFDELEYSNEINNLIWNTEDFVLGLTKVFYKFIYIDIATDLVEQSMKLK</sequence>
<gene>
    <name type="ordered locus">MIMI_L444</name>
</gene>
<protein>
    <recommendedName>
        <fullName>Putative ADP-ribosyl glycohydrolase L444</fullName>
        <ecNumber>3.2.2.-</ecNumber>
    </recommendedName>
</protein>
<name>ADPRL_MIMIV</name>
<proteinExistence type="inferred from homology"/>
<comment type="similarity">
    <text evidence="2">Belongs to the ADP-ribosylglycohydrolase family.</text>
</comment>
<accession>Q5UQP4</accession>
<evidence type="ECO:0000256" key="1">
    <source>
        <dbReference type="SAM" id="MobiDB-lite"/>
    </source>
</evidence>
<evidence type="ECO:0000305" key="2"/>
<reference key="1">
    <citation type="journal article" date="2004" name="Science">
        <title>The 1.2-megabase genome sequence of Mimivirus.</title>
        <authorList>
            <person name="Raoult D."/>
            <person name="Audic S."/>
            <person name="Robert C."/>
            <person name="Abergel C."/>
            <person name="Renesto P."/>
            <person name="Ogata H."/>
            <person name="La Scola B."/>
            <person name="Susan M."/>
            <person name="Claverie J.-M."/>
        </authorList>
    </citation>
    <scope>NUCLEOTIDE SEQUENCE [LARGE SCALE GENOMIC DNA]</scope>
    <source>
        <strain>Rowbotham-Bradford</strain>
    </source>
</reference>